<organism>
    <name type="scientific">Streptococcus gordonii (strain Challis / ATCC 35105 / BCRC 15272 / CH1 / DL1 / V288)</name>
    <dbReference type="NCBI Taxonomy" id="467705"/>
    <lineage>
        <taxon>Bacteria</taxon>
        <taxon>Bacillati</taxon>
        <taxon>Bacillota</taxon>
        <taxon>Bacilli</taxon>
        <taxon>Lactobacillales</taxon>
        <taxon>Streptococcaceae</taxon>
        <taxon>Streptococcus</taxon>
    </lineage>
</organism>
<name>RECU_STRGC</name>
<gene>
    <name evidence="1" type="primary">recU</name>
    <name type="ordered locus">SGO_0587</name>
</gene>
<keyword id="KW-0963">Cytoplasm</keyword>
<keyword id="KW-0227">DNA damage</keyword>
<keyword id="KW-0233">DNA recombination</keyword>
<keyword id="KW-0234">DNA repair</keyword>
<keyword id="KW-0255">Endonuclease</keyword>
<keyword id="KW-0378">Hydrolase</keyword>
<keyword id="KW-0460">Magnesium</keyword>
<keyword id="KW-0479">Metal-binding</keyword>
<keyword id="KW-0540">Nuclease</keyword>
<keyword id="KW-1185">Reference proteome</keyword>
<proteinExistence type="inferred from homology"/>
<accession>A8AVU3</accession>
<comment type="function">
    <text evidence="1">Endonuclease that resolves Holliday junction intermediates in genetic recombination. Cleaves mobile four-strand junctions by introducing symmetrical nicks in paired strands. Promotes annealing of linear ssDNA with homologous dsDNA. Required for DNA repair, homologous recombination and chromosome segregation.</text>
</comment>
<comment type="catalytic activity">
    <reaction evidence="1">
        <text>Endonucleolytic cleavage at a junction such as a reciprocal single-stranded crossover between two homologous DNA duplexes (Holliday junction).</text>
        <dbReference type="EC" id="3.1.21.10"/>
    </reaction>
</comment>
<comment type="cofactor">
    <cofactor evidence="1">
        <name>Mg(2+)</name>
        <dbReference type="ChEBI" id="CHEBI:18420"/>
    </cofactor>
    <text evidence="1">Binds 1 Mg(2+) ion per subunit.</text>
</comment>
<comment type="subcellular location">
    <subcellularLocation>
        <location evidence="1">Cytoplasm</location>
    </subcellularLocation>
</comment>
<comment type="similarity">
    <text evidence="1">Belongs to the RecU family.</text>
</comment>
<feature type="chain" id="PRO_1000076343" description="Holliday junction resolvase RecU">
    <location>
        <begin position="1"/>
        <end position="200"/>
    </location>
</feature>
<feature type="binding site" evidence="1">
    <location>
        <position position="82"/>
    </location>
    <ligand>
        <name>Mg(2+)</name>
        <dbReference type="ChEBI" id="CHEBI:18420"/>
    </ligand>
</feature>
<feature type="binding site" evidence="1">
    <location>
        <position position="84"/>
    </location>
    <ligand>
        <name>Mg(2+)</name>
        <dbReference type="ChEBI" id="CHEBI:18420"/>
    </ligand>
</feature>
<feature type="binding site" evidence="1">
    <location>
        <position position="97"/>
    </location>
    <ligand>
        <name>Mg(2+)</name>
        <dbReference type="ChEBI" id="CHEBI:18420"/>
    </ligand>
</feature>
<feature type="binding site" evidence="1">
    <location>
        <position position="116"/>
    </location>
    <ligand>
        <name>Mg(2+)</name>
        <dbReference type="ChEBI" id="CHEBI:18420"/>
    </ligand>
</feature>
<feature type="site" description="Transition state stabilizer" evidence="1">
    <location>
        <position position="99"/>
    </location>
</feature>
<reference key="1">
    <citation type="journal article" date="2007" name="J. Bacteriol.">
        <title>Genome-wide transcriptional changes in Streptococcus gordonii in response to competence signaling peptide.</title>
        <authorList>
            <person name="Vickerman M.M."/>
            <person name="Iobst S."/>
            <person name="Jesionowski A.M."/>
            <person name="Gill S.R."/>
        </authorList>
    </citation>
    <scope>NUCLEOTIDE SEQUENCE [LARGE SCALE GENOMIC DNA]</scope>
    <source>
        <strain>Challis / ATCC 35105 / BCRC 15272 / CH1 / DL1 / V288</strain>
    </source>
</reference>
<dbReference type="EC" id="3.1.21.10" evidence="1"/>
<dbReference type="EMBL" id="CP000725">
    <property type="protein sequence ID" value="ABV10217.1"/>
    <property type="molecule type" value="Genomic_DNA"/>
</dbReference>
<dbReference type="RefSeq" id="WP_012000083.1">
    <property type="nucleotide sequence ID" value="NC_009785.1"/>
</dbReference>
<dbReference type="SMR" id="A8AVU3"/>
<dbReference type="STRING" id="467705.SGO_0587"/>
<dbReference type="KEGG" id="sgo:SGO_0587"/>
<dbReference type="eggNOG" id="COG3331">
    <property type="taxonomic scope" value="Bacteria"/>
</dbReference>
<dbReference type="HOGENOM" id="CLU_096340_0_0_9"/>
<dbReference type="Proteomes" id="UP000001131">
    <property type="component" value="Chromosome"/>
</dbReference>
<dbReference type="GO" id="GO:0005737">
    <property type="term" value="C:cytoplasm"/>
    <property type="evidence" value="ECO:0007669"/>
    <property type="project" value="UniProtKB-SubCell"/>
</dbReference>
<dbReference type="GO" id="GO:0004519">
    <property type="term" value="F:endonuclease activity"/>
    <property type="evidence" value="ECO:0007669"/>
    <property type="project" value="UniProtKB-UniRule"/>
</dbReference>
<dbReference type="GO" id="GO:0000287">
    <property type="term" value="F:magnesium ion binding"/>
    <property type="evidence" value="ECO:0007669"/>
    <property type="project" value="UniProtKB-UniRule"/>
</dbReference>
<dbReference type="GO" id="GO:0003676">
    <property type="term" value="F:nucleic acid binding"/>
    <property type="evidence" value="ECO:0007669"/>
    <property type="project" value="InterPro"/>
</dbReference>
<dbReference type="GO" id="GO:0007059">
    <property type="term" value="P:chromosome segregation"/>
    <property type="evidence" value="ECO:0007669"/>
    <property type="project" value="UniProtKB-UniRule"/>
</dbReference>
<dbReference type="GO" id="GO:0006310">
    <property type="term" value="P:DNA recombination"/>
    <property type="evidence" value="ECO:0007669"/>
    <property type="project" value="UniProtKB-UniRule"/>
</dbReference>
<dbReference type="GO" id="GO:0006281">
    <property type="term" value="P:DNA repair"/>
    <property type="evidence" value="ECO:0007669"/>
    <property type="project" value="UniProtKB-UniRule"/>
</dbReference>
<dbReference type="CDD" id="cd22354">
    <property type="entry name" value="RecU-like"/>
    <property type="match status" value="1"/>
</dbReference>
<dbReference type="Gene3D" id="3.40.1350.10">
    <property type="match status" value="1"/>
</dbReference>
<dbReference type="HAMAP" id="MF_00130">
    <property type="entry name" value="RecU"/>
    <property type="match status" value="1"/>
</dbReference>
<dbReference type="InterPro" id="IPR004612">
    <property type="entry name" value="Resolv_RecU"/>
</dbReference>
<dbReference type="InterPro" id="IPR011335">
    <property type="entry name" value="Restrct_endonuc-II-like"/>
</dbReference>
<dbReference type="InterPro" id="IPR011856">
    <property type="entry name" value="tRNA_endonuc-like_dom_sf"/>
</dbReference>
<dbReference type="NCBIfam" id="NF002580">
    <property type="entry name" value="PRK02234.1-1"/>
    <property type="match status" value="1"/>
</dbReference>
<dbReference type="NCBIfam" id="NF002584">
    <property type="entry name" value="PRK02234.1-5"/>
    <property type="match status" value="1"/>
</dbReference>
<dbReference type="NCBIfam" id="TIGR00648">
    <property type="entry name" value="recU"/>
    <property type="match status" value="1"/>
</dbReference>
<dbReference type="Pfam" id="PF03838">
    <property type="entry name" value="RecU"/>
    <property type="match status" value="1"/>
</dbReference>
<dbReference type="PIRSF" id="PIRSF037785">
    <property type="entry name" value="RecU"/>
    <property type="match status" value="1"/>
</dbReference>
<dbReference type="SUPFAM" id="SSF52980">
    <property type="entry name" value="Restriction endonuclease-like"/>
    <property type="match status" value="1"/>
</dbReference>
<evidence type="ECO:0000255" key="1">
    <source>
        <dbReference type="HAMAP-Rule" id="MF_00130"/>
    </source>
</evidence>
<sequence>MVNYPHKLTSKNNIKKVKKETVDFANRGMTFEKMINDTNDYYLSRGLAVIHKKPTPVQIVKVDYPKRSRAKIVEAYFRQASTTDYSGVYRGHYIDFEAKETRQKQSMPMKNFHAHQIEHMNQVLNQGGICFVLLHFSSLKETYLLPAPYLIEFYKIDKGGKSMPLDYIQKHGYLIEQNILPSVPYLDIISKNLLGGHSNE</sequence>
<protein>
    <recommendedName>
        <fullName evidence="1">Holliday junction resolvase RecU</fullName>
        <ecNumber evidence="1">3.1.21.10</ecNumber>
    </recommendedName>
    <alternativeName>
        <fullName evidence="1">Recombination protein U homolog</fullName>
    </alternativeName>
</protein>